<keyword id="KW-0037">Angiogenesis</keyword>
<keyword id="KW-0053">Apoptosis</keyword>
<keyword id="KW-0130">Cell adhesion</keyword>
<keyword id="KW-1003">Cell membrane</keyword>
<keyword id="KW-0217">Developmental protein</keyword>
<keyword id="KW-0221">Differentiation</keyword>
<keyword id="KW-0967">Endosome</keyword>
<keyword id="KW-0342">GTP-binding</keyword>
<keyword id="KW-0449">Lipoprotein</keyword>
<keyword id="KW-0472">Membrane</keyword>
<keyword id="KW-0488">Methylation</keyword>
<keyword id="KW-0547">Nucleotide-binding</keyword>
<keyword id="KW-0539">Nucleus</keyword>
<keyword id="KW-0564">Palmitate</keyword>
<keyword id="KW-0597">Phosphoprotein</keyword>
<keyword id="KW-0636">Prenylation</keyword>
<keyword id="KW-0653">Protein transport</keyword>
<keyword id="KW-1185">Reference proteome</keyword>
<keyword id="KW-0813">Transport</keyword>
<keyword id="KW-0043">Tumor suppressor</keyword>
<proteinExistence type="evidence at protein level"/>
<name>RHOB_RAT</name>
<feature type="chain" id="PRO_0000030421" description="Rho-related GTP-binding protein RhoB">
    <location>
        <begin position="1"/>
        <end position="193"/>
    </location>
</feature>
<feature type="propeptide" id="PRO_0000030422" description="Removed in mature form" evidence="1">
    <location>
        <begin position="194"/>
        <end position="196"/>
    </location>
</feature>
<feature type="short sequence motif" description="Effector region" evidence="4">
    <location>
        <begin position="34"/>
        <end position="42"/>
    </location>
</feature>
<feature type="binding site" evidence="1">
    <location>
        <begin position="12"/>
        <end position="19"/>
    </location>
    <ligand>
        <name>GTP</name>
        <dbReference type="ChEBI" id="CHEBI:37565"/>
    </ligand>
</feature>
<feature type="binding site" evidence="1">
    <location>
        <begin position="59"/>
        <end position="63"/>
    </location>
    <ligand>
        <name>GTP</name>
        <dbReference type="ChEBI" id="CHEBI:37565"/>
    </ligand>
</feature>
<feature type="binding site" evidence="1">
    <location>
        <begin position="117"/>
        <end position="120"/>
    </location>
    <ligand>
        <name>GTP</name>
        <dbReference type="ChEBI" id="CHEBI:37565"/>
    </ligand>
</feature>
<feature type="modified residue" description="Phosphotyrosine" evidence="3">
    <location>
        <position position="154"/>
    </location>
</feature>
<feature type="modified residue" description="Cysteine methyl ester" evidence="1">
    <location>
        <position position="193"/>
    </location>
</feature>
<feature type="lipid moiety-binding region" description="S-palmitoyl cysteine" evidence="1">
    <location>
        <position position="189"/>
    </location>
</feature>
<feature type="lipid moiety-binding region" description="S-palmitoyl cysteine" evidence="1">
    <location>
        <position position="192"/>
    </location>
</feature>
<feature type="lipid moiety-binding region" description="S-farnesyl cysteine; in plasma membrane form" evidence="1">
    <location>
        <position position="193"/>
    </location>
</feature>
<feature type="lipid moiety-binding region" description="S-geranylgeranyl cysteine; in endosomal form" evidence="1">
    <location>
        <position position="193"/>
    </location>
</feature>
<reference key="1">
    <citation type="journal article" date="1991" name="Mol. Cell. Biol.">
        <title>The ras-related gene rhoB is an immediate-early gene inducible by v-Fps, epidermal growth factor, and platelet-derived growth factor in rat fibroblasts.</title>
        <authorList>
            <person name="Jaehner D."/>
            <person name="Hunter T."/>
        </authorList>
    </citation>
    <scope>NUCLEOTIDE SEQUENCE [MRNA]</scope>
</reference>
<reference key="2">
    <citation type="journal article" date="1996" name="Mol. Cell. Biol.">
        <title>The p160 RhoA-binding kinase ROK alpha is a member of a kinase family and is involved in the reorganization of the cytoskeleton.</title>
        <authorList>
            <person name="Leung T."/>
            <person name="Chen X.-Q."/>
            <person name="Manser E."/>
            <person name="Lim L."/>
        </authorList>
    </citation>
    <scope>INTERACTION WITH ROCK1 AND ROCK2</scope>
</reference>
<reference key="3">
    <citation type="journal article" date="2003" name="Oncogene">
        <title>Mitogen-responsive expression of RhoB is regulated by RNA stability.</title>
        <authorList>
            <person name="Malcolm T."/>
            <person name="Ettehadieh E."/>
            <person name="Sadowski I."/>
        </authorList>
    </citation>
    <scope>INDUCTION</scope>
</reference>
<accession>P62747</accession>
<accession>P01121</accession>
<accession>Q9CUV7</accession>
<dbReference type="EMBL" id="M74295">
    <property type="protein sequence ID" value="AAA42040.1"/>
    <property type="molecule type" value="mRNA"/>
</dbReference>
<dbReference type="PIR" id="A39727">
    <property type="entry name" value="TVRTRH"/>
</dbReference>
<dbReference type="RefSeq" id="NP_071987.1">
    <property type="nucleotide sequence ID" value="NM_022542.2"/>
</dbReference>
<dbReference type="SMR" id="P62747"/>
<dbReference type="BioGRID" id="249057">
    <property type="interactions" value="1"/>
</dbReference>
<dbReference type="FunCoup" id="P62747">
    <property type="interactions" value="1056"/>
</dbReference>
<dbReference type="STRING" id="10116.ENSRNOP00000008008"/>
<dbReference type="iPTMnet" id="P62747"/>
<dbReference type="PhosphoSitePlus" id="P62747"/>
<dbReference type="SwissPalm" id="P62747"/>
<dbReference type="jPOST" id="P62747"/>
<dbReference type="PaxDb" id="10116-ENSRNOP00000008008"/>
<dbReference type="GeneID" id="64373"/>
<dbReference type="KEGG" id="rno:64373"/>
<dbReference type="AGR" id="RGD:621309"/>
<dbReference type="CTD" id="388"/>
<dbReference type="RGD" id="621309">
    <property type="gene designation" value="Rhob"/>
</dbReference>
<dbReference type="eggNOG" id="KOG0393">
    <property type="taxonomic scope" value="Eukaryota"/>
</dbReference>
<dbReference type="HOGENOM" id="CLU_041217_21_2_1"/>
<dbReference type="InParanoid" id="P62747"/>
<dbReference type="OrthoDB" id="4627at9989"/>
<dbReference type="PhylomeDB" id="P62747"/>
<dbReference type="TreeFam" id="TF300837"/>
<dbReference type="Reactome" id="R-RNO-114604">
    <property type="pathway name" value="GPVI-mediated activation cascade"/>
</dbReference>
<dbReference type="Reactome" id="R-RNO-416482">
    <property type="pathway name" value="G alpha (12/13) signalling events"/>
</dbReference>
<dbReference type="Reactome" id="R-RNO-416572">
    <property type="pathway name" value="Sema4D induced cell migration and growth-cone collapse"/>
</dbReference>
<dbReference type="Reactome" id="R-RNO-5625740">
    <property type="pathway name" value="RHO GTPases activate PKNs"/>
</dbReference>
<dbReference type="Reactome" id="R-RNO-5625900">
    <property type="pathway name" value="RHO GTPases activate CIT"/>
</dbReference>
<dbReference type="Reactome" id="R-RNO-5627117">
    <property type="pathway name" value="RHO GTPases Activate ROCKs"/>
</dbReference>
<dbReference type="Reactome" id="R-RNO-5663220">
    <property type="pathway name" value="RHO GTPases Activate Formins"/>
</dbReference>
<dbReference type="Reactome" id="R-RNO-9013026">
    <property type="pathway name" value="RHOB GTPase cycle"/>
</dbReference>
<dbReference type="PRO" id="PR:P62747"/>
<dbReference type="Proteomes" id="UP000002494">
    <property type="component" value="Chromosome 6"/>
</dbReference>
<dbReference type="Bgee" id="ENSRNOG00000021403">
    <property type="expression patterns" value="Expressed in Ammon's horn and 19 other cell types or tissues"/>
</dbReference>
<dbReference type="GO" id="GO:0032154">
    <property type="term" value="C:cleavage furrow"/>
    <property type="evidence" value="ECO:0000250"/>
    <property type="project" value="UniProtKB"/>
</dbReference>
<dbReference type="GO" id="GO:0005829">
    <property type="term" value="C:cytosol"/>
    <property type="evidence" value="ECO:0000314"/>
    <property type="project" value="BHF-UCL"/>
</dbReference>
<dbReference type="GO" id="GO:0005769">
    <property type="term" value="C:early endosome"/>
    <property type="evidence" value="ECO:0000266"/>
    <property type="project" value="RGD"/>
</dbReference>
<dbReference type="GO" id="GO:0010008">
    <property type="term" value="C:endosome membrane"/>
    <property type="evidence" value="ECO:0000250"/>
    <property type="project" value="UniProtKB"/>
</dbReference>
<dbReference type="GO" id="GO:0005770">
    <property type="term" value="C:late endosome"/>
    <property type="evidence" value="ECO:0000266"/>
    <property type="project" value="RGD"/>
</dbReference>
<dbReference type="GO" id="GO:0031902">
    <property type="term" value="C:late endosome membrane"/>
    <property type="evidence" value="ECO:0007669"/>
    <property type="project" value="UniProtKB-SubCell"/>
</dbReference>
<dbReference type="GO" id="GO:0016020">
    <property type="term" value="C:membrane"/>
    <property type="evidence" value="ECO:0000314"/>
    <property type="project" value="BHF-UCL"/>
</dbReference>
<dbReference type="GO" id="GO:0005634">
    <property type="term" value="C:nucleus"/>
    <property type="evidence" value="ECO:0000250"/>
    <property type="project" value="UniProtKB"/>
</dbReference>
<dbReference type="GO" id="GO:0005886">
    <property type="term" value="C:plasma membrane"/>
    <property type="evidence" value="ECO:0000250"/>
    <property type="project" value="UniProtKB"/>
</dbReference>
<dbReference type="GO" id="GO:0098685">
    <property type="term" value="C:Schaffer collateral - CA1 synapse"/>
    <property type="evidence" value="ECO:0000266"/>
    <property type="project" value="RGD"/>
</dbReference>
<dbReference type="GO" id="GO:0045202">
    <property type="term" value="C:synapse"/>
    <property type="evidence" value="ECO:0000314"/>
    <property type="project" value="SynGO"/>
</dbReference>
<dbReference type="GO" id="GO:0019003">
    <property type="term" value="F:GDP binding"/>
    <property type="evidence" value="ECO:0000266"/>
    <property type="project" value="RGD"/>
</dbReference>
<dbReference type="GO" id="GO:0005525">
    <property type="term" value="F:GTP binding"/>
    <property type="evidence" value="ECO:0000318"/>
    <property type="project" value="GO_Central"/>
</dbReference>
<dbReference type="GO" id="GO:0003924">
    <property type="term" value="F:GTPase activity"/>
    <property type="evidence" value="ECO:0000318"/>
    <property type="project" value="GO_Central"/>
</dbReference>
<dbReference type="GO" id="GO:0007015">
    <property type="term" value="P:actin filament organization"/>
    <property type="evidence" value="ECO:0000318"/>
    <property type="project" value="GO_Central"/>
</dbReference>
<dbReference type="GO" id="GO:0001525">
    <property type="term" value="P:angiogenesis"/>
    <property type="evidence" value="ECO:0007669"/>
    <property type="project" value="UniProtKB-KW"/>
</dbReference>
<dbReference type="GO" id="GO:0006915">
    <property type="term" value="P:apoptotic process"/>
    <property type="evidence" value="ECO:0007669"/>
    <property type="project" value="UniProtKB-KW"/>
</dbReference>
<dbReference type="GO" id="GO:0007155">
    <property type="term" value="P:cell adhesion"/>
    <property type="evidence" value="ECO:0000250"/>
    <property type="project" value="UniProtKB"/>
</dbReference>
<dbReference type="GO" id="GO:0030154">
    <property type="term" value="P:cell differentiation"/>
    <property type="evidence" value="ECO:0007669"/>
    <property type="project" value="UniProtKB-KW"/>
</dbReference>
<dbReference type="GO" id="GO:0070301">
    <property type="term" value="P:cellular response to hydrogen peroxide"/>
    <property type="evidence" value="ECO:0000250"/>
    <property type="project" value="UniProtKB"/>
</dbReference>
<dbReference type="GO" id="GO:0071479">
    <property type="term" value="P:cellular response to ionizing radiation"/>
    <property type="evidence" value="ECO:0000250"/>
    <property type="project" value="UniProtKB"/>
</dbReference>
<dbReference type="GO" id="GO:0008333">
    <property type="term" value="P:endosome to lysosome transport"/>
    <property type="evidence" value="ECO:0000250"/>
    <property type="project" value="UniProtKB"/>
</dbReference>
<dbReference type="GO" id="GO:0061154">
    <property type="term" value="P:endothelial tube morphogenesis"/>
    <property type="evidence" value="ECO:0000266"/>
    <property type="project" value="RGD"/>
</dbReference>
<dbReference type="GO" id="GO:0006886">
    <property type="term" value="P:intracellular protein transport"/>
    <property type="evidence" value="ECO:0000266"/>
    <property type="project" value="RGD"/>
</dbReference>
<dbReference type="GO" id="GO:0000281">
    <property type="term" value="P:mitotic cytokinesis"/>
    <property type="evidence" value="ECO:0000250"/>
    <property type="project" value="UniProtKB"/>
</dbReference>
<dbReference type="GO" id="GO:0045786">
    <property type="term" value="P:negative regulation of cell cycle"/>
    <property type="evidence" value="ECO:0000250"/>
    <property type="project" value="UniProtKB"/>
</dbReference>
<dbReference type="GO" id="GO:0030336">
    <property type="term" value="P:negative regulation of cell migration"/>
    <property type="evidence" value="ECO:0000266"/>
    <property type="project" value="RGD"/>
</dbReference>
<dbReference type="GO" id="GO:0045766">
    <property type="term" value="P:positive regulation of angiogenesis"/>
    <property type="evidence" value="ECO:0000250"/>
    <property type="project" value="UniProtKB"/>
</dbReference>
<dbReference type="GO" id="GO:0043065">
    <property type="term" value="P:positive regulation of apoptotic process"/>
    <property type="evidence" value="ECO:0000250"/>
    <property type="project" value="UniProtKB"/>
</dbReference>
<dbReference type="GO" id="GO:0010595">
    <property type="term" value="P:positive regulation of endothelial cell migration"/>
    <property type="evidence" value="ECO:0000266"/>
    <property type="project" value="RGD"/>
</dbReference>
<dbReference type="GO" id="GO:0030334">
    <property type="term" value="P:regulation of cell migration"/>
    <property type="evidence" value="ECO:0000266"/>
    <property type="project" value="RGD"/>
</dbReference>
<dbReference type="GO" id="GO:0099159">
    <property type="term" value="P:regulation of modification of postsynaptic structure"/>
    <property type="evidence" value="ECO:0000266"/>
    <property type="project" value="RGD"/>
</dbReference>
<dbReference type="GO" id="GO:0007165">
    <property type="term" value="P:signal transduction"/>
    <property type="evidence" value="ECO:0000318"/>
    <property type="project" value="GO_Central"/>
</dbReference>
<dbReference type="GO" id="GO:0007264">
    <property type="term" value="P:small GTPase-mediated signal transduction"/>
    <property type="evidence" value="ECO:0007669"/>
    <property type="project" value="InterPro"/>
</dbReference>
<dbReference type="CDD" id="cd01870">
    <property type="entry name" value="RhoA_like"/>
    <property type="match status" value="1"/>
</dbReference>
<dbReference type="FunFam" id="3.40.50.300:FF:000095">
    <property type="entry name" value="Rho-related GTP-binding protein RhoC"/>
    <property type="match status" value="1"/>
</dbReference>
<dbReference type="Gene3D" id="3.40.50.300">
    <property type="entry name" value="P-loop containing nucleotide triphosphate hydrolases"/>
    <property type="match status" value="1"/>
</dbReference>
<dbReference type="InterPro" id="IPR027417">
    <property type="entry name" value="P-loop_NTPase"/>
</dbReference>
<dbReference type="InterPro" id="IPR005225">
    <property type="entry name" value="Small_GTP-bd"/>
</dbReference>
<dbReference type="InterPro" id="IPR001806">
    <property type="entry name" value="Small_GTPase"/>
</dbReference>
<dbReference type="InterPro" id="IPR003578">
    <property type="entry name" value="Small_GTPase_Rho"/>
</dbReference>
<dbReference type="NCBIfam" id="TIGR00231">
    <property type="entry name" value="small_GTP"/>
    <property type="match status" value="1"/>
</dbReference>
<dbReference type="PANTHER" id="PTHR24072">
    <property type="entry name" value="RHO FAMILY GTPASE"/>
    <property type="match status" value="1"/>
</dbReference>
<dbReference type="Pfam" id="PF00071">
    <property type="entry name" value="Ras"/>
    <property type="match status" value="1"/>
</dbReference>
<dbReference type="PRINTS" id="PR00449">
    <property type="entry name" value="RASTRNSFRMNG"/>
</dbReference>
<dbReference type="SMART" id="SM00175">
    <property type="entry name" value="RAB"/>
    <property type="match status" value="1"/>
</dbReference>
<dbReference type="SMART" id="SM00173">
    <property type="entry name" value="RAS"/>
    <property type="match status" value="1"/>
</dbReference>
<dbReference type="SMART" id="SM00174">
    <property type="entry name" value="RHO"/>
    <property type="match status" value="1"/>
</dbReference>
<dbReference type="SUPFAM" id="SSF52540">
    <property type="entry name" value="P-loop containing nucleoside triphosphate hydrolases"/>
    <property type="match status" value="1"/>
</dbReference>
<dbReference type="PROSITE" id="PS51420">
    <property type="entry name" value="RHO"/>
    <property type="match status" value="1"/>
</dbReference>
<organism>
    <name type="scientific">Rattus norvegicus</name>
    <name type="common">Rat</name>
    <dbReference type="NCBI Taxonomy" id="10116"/>
    <lineage>
        <taxon>Eukaryota</taxon>
        <taxon>Metazoa</taxon>
        <taxon>Chordata</taxon>
        <taxon>Craniata</taxon>
        <taxon>Vertebrata</taxon>
        <taxon>Euteleostomi</taxon>
        <taxon>Mammalia</taxon>
        <taxon>Eutheria</taxon>
        <taxon>Euarchontoglires</taxon>
        <taxon>Glires</taxon>
        <taxon>Rodentia</taxon>
        <taxon>Myomorpha</taxon>
        <taxon>Muroidea</taxon>
        <taxon>Muridae</taxon>
        <taxon>Murinae</taxon>
        <taxon>Rattus</taxon>
    </lineage>
</organism>
<comment type="function">
    <text evidence="1">Mediates apoptosis in neoplastically transformed cells after DNA damage. Not essential for development but affects cell adhesion and growth factor signaling in transformed cells. Plays a negative role in tumorigenesis as deletion causes tumor formation. Involved in intracellular protein trafficking of a number of proteins. Targets PKN1 to endosomes and is involved in trafficking of the EGF receptor from late endosomes to lysosomes. Also required for stability and nuclear trafficking of AKT1/AKT which promotes endothelial cell survival during vascular development. Serves as a microtubule-dependent signal that is required for the myosin contractile ring formation during cell cycle cytokinesis. Required for genotoxic stress-induced cell death in breast cancer cells (By similarity).</text>
</comment>
<comment type="subunit">
    <text evidence="2 3 6">Binds ROCK1 and ROCK2 (PubMed:8816443). Also binds PKN1/PRK1. Interacts with ARGGEF3. Interacts with RTKN. Interacts with AKAP13. Interacts with RIPOR1 (By similarity).</text>
</comment>
<comment type="subcellular location">
    <subcellularLocation>
        <location evidence="1">Late endosome membrane</location>
        <topology evidence="1">Lipid-anchor</topology>
    </subcellularLocation>
    <subcellularLocation>
        <location evidence="1">Cell membrane</location>
        <topology evidence="1">Lipid-anchor</topology>
    </subcellularLocation>
    <subcellularLocation>
        <location evidence="1">Nucleus</location>
    </subcellularLocation>
    <subcellularLocation>
        <location evidence="1">Cleavage furrow</location>
    </subcellularLocation>
    <text evidence="1">Late endosomal membrane (geranylgeranylated form). Plasma membrane (farnesylated form). Also detected at the nuclear margin and in the nucleus. Translocates to the equatorial region before furrow formation in a ECT2-dependent manner (By similarity).</text>
</comment>
<comment type="induction">
    <text evidence="5">Expressed at very low levels in quiescent cells but is transiently induced by serum stimulation with levels increasing to a maximum within 30 minutes and declining over the next hour.</text>
</comment>
<comment type="PTM">
    <text evidence="1">Prenylation specifies the subcellular location of RHOB. The farnesylated form is localized to the plasma membrane while the geranylgeranylated form is localized to the endosome (By similarity).</text>
</comment>
<comment type="similarity">
    <text evidence="7">Belongs to the small GTPase superfamily. Rho family.</text>
</comment>
<protein>
    <recommendedName>
        <fullName>Rho-related GTP-binding protein RhoB</fullName>
    </recommendedName>
</protein>
<gene>
    <name type="primary">Rhob</name>
    <name type="synonym">Arhb</name>
</gene>
<sequence length="196" mass="22123">MAAIRKKLVVVGDGACGKTCLLIVFSKDEFPEVYVPTVFENYVADIEVDGKQVELALWDTAGQEDYDRLRPLSYPDTDVILMCFSVDSPDSLENIPEKWVPEVKHFCPNVPIILVANKKDLRSDEHVRTELARMKQEPVRTDDGRAMAVRIQAYDYLECSAKTKEGVREVFETATRAALQKRYGSQNGCINCCKVL</sequence>
<evidence type="ECO:0000250" key="1"/>
<evidence type="ECO:0000250" key="2">
    <source>
        <dbReference type="UniProtKB" id="P62745"/>
    </source>
</evidence>
<evidence type="ECO:0000250" key="3">
    <source>
        <dbReference type="UniProtKB" id="P62746"/>
    </source>
</evidence>
<evidence type="ECO:0000255" key="4"/>
<evidence type="ECO:0000269" key="5">
    <source>
    </source>
</evidence>
<evidence type="ECO:0000269" key="6">
    <source>
    </source>
</evidence>
<evidence type="ECO:0000305" key="7"/>